<keyword id="KW-0127">Catecholamine biosynthesis</keyword>
<keyword id="KW-0186">Copper</keyword>
<keyword id="KW-0968">Cytoplasmic vesicle</keyword>
<keyword id="KW-0903">Direct protein sequencing</keyword>
<keyword id="KW-1015">Disulfide bond</keyword>
<keyword id="KW-0325">Glycoprotein</keyword>
<keyword id="KW-0472">Membrane</keyword>
<keyword id="KW-0479">Metal-binding</keyword>
<keyword id="KW-0503">Monooxygenase</keyword>
<keyword id="KW-0560">Oxidoreductase</keyword>
<keyword id="KW-1185">Reference proteome</keyword>
<keyword id="KW-0735">Signal-anchor</keyword>
<keyword id="KW-0812">Transmembrane</keyword>
<keyword id="KW-1133">Transmembrane helix</keyword>
<keyword id="KW-0847">Vitamin C</keyword>
<protein>
    <recommendedName>
        <fullName>Dopamine beta-hydroxylase</fullName>
        <ecNumber evidence="9 10">1.14.17.1</ecNumber>
    </recommendedName>
    <alternativeName>
        <fullName>Dopamine beta-monooxygenase</fullName>
    </alternativeName>
    <component>
        <recommendedName>
            <fullName>Soluble dopamine beta-hydroxylase</fullName>
        </recommendedName>
    </component>
</protein>
<reference key="1">
    <citation type="journal article" date="1989" name="Biochemistry">
        <title>Structure of bovine adrenal dopamine beta-monooxygenase, as deduced from cDNA and protein sequencing: evidence that the membrane-bound form of the enzyme is anchored by an uncleaved signal peptide.</title>
        <authorList>
            <person name="Taljanidisz J."/>
            <person name="Stewart L."/>
            <person name="Smith A.J."/>
            <person name="Klinman J.P."/>
        </authorList>
    </citation>
    <scope>NUCLEOTIDE SEQUENCE [MRNA]</scope>
    <scope>PROTEIN SEQUENCE OF N-TERMINUS OF SOLUBLE AND MEMBRANE-BOUND FORM</scope>
    <scope>CLEAVAGE SITE</scope>
    <scope>SUBCELLULAR LOCATION</scope>
    <scope>CATALYTIC ACTIVITY</scope>
    <scope>FUNCTION</scope>
    <scope>COFACTOR</scope>
    <scope>PATHWAY</scope>
    <scope>TISSUE SPECIFICITY</scope>
</reference>
<reference key="2">
    <citation type="journal article" date="1990" name="J. Biol. Chem.">
        <title>Bovine dopamine beta-hydroxylase cDNA. Complete coding sequence and expression in mammalian cells with vaccinia virus vector.</title>
        <authorList>
            <person name="Lewis E.J."/>
            <person name="Allison S."/>
            <person name="Fader D."/>
            <person name="Claflin V."/>
            <person name="Baizer L."/>
        </authorList>
    </citation>
    <scope>NUCLEOTIDE SEQUENCE [MRNA]</scope>
</reference>
<reference key="3">
    <citation type="journal article" date="2005" name="BMC Genomics">
        <title>Characterization of 954 bovine full-CDS cDNA sequences.</title>
        <authorList>
            <person name="Harhay G.P."/>
            <person name="Sonstegard T.S."/>
            <person name="Keele J.W."/>
            <person name="Heaton M.P."/>
            <person name="Clawson M.L."/>
            <person name="Snelling W.M."/>
            <person name="Wiedmann R.T."/>
            <person name="Van Tassell C.P."/>
            <person name="Smith T.P.L."/>
        </authorList>
    </citation>
    <scope>NUCLEOTIDE SEQUENCE [LARGE SCALE MRNA] OF 4-610</scope>
</reference>
<reference key="4">
    <citation type="journal article" date="1990" name="J. Neurochem.">
        <title>Molecular cloning, structure, and expression of dopamine-beta-hydroxylase from bovine adrenal medulla.</title>
        <authorList>
            <person name="Wu H.J."/>
            <person name="Parmer R.J."/>
            <person name="Koop A.H."/>
            <person name="Rozansky D.J."/>
            <person name="O'Connor D.T."/>
        </authorList>
    </citation>
    <scope>NUCLEOTIDE SEQUENCE [MRNA] OF 14-610</scope>
    <scope>GLYCOSYLATION</scope>
    <source>
        <tissue>Adrenal medulla</tissue>
    </source>
</reference>
<reference key="5">
    <citation type="journal article" date="1990" name="J. Biol. Chem.">
        <title>Primary amino acid sequence of bovine dopamine beta-hydroxylase.</title>
        <authorList>
            <person name="Robertson J.G."/>
            <person name="Desai P.R."/>
            <person name="Kumar A."/>
            <person name="Farrington G.K."/>
            <person name="Fitzpatrick P.F."/>
            <person name="Villafranca J.J."/>
        </authorList>
    </citation>
    <scope>PROTEIN SEQUENCE OF 33-610</scope>
    <scope>GLYCOSYLATION</scope>
</reference>
<reference key="6">
    <citation type="journal article" date="1977" name="Biochem. Biophys. Res. Commun.">
        <title>NH2-terminal sequence of dopamine beta-hydroxylase from bovine adrenal medulla.</title>
        <authorList>
            <person name="Skotland T."/>
            <person name="Ljones T."/>
            <person name="Flatmark T."/>
            <person name="Sletten K."/>
        </authorList>
    </citation>
    <scope>PROTEIN SEQUENCE OF 33-50</scope>
    <scope>TISSUE SPECIFICITY</scope>
    <scope>SUBCELLULAR LOCATION</scope>
    <source>
        <tissue>Adrenal medulla</tissue>
    </source>
</reference>
<reference key="7">
    <citation type="journal article" date="1989" name="J. Biol. Chem.">
        <title>The membrane-binding segment of dopamine beta-hydroxylase is not an uncleaved signal sequence.</title>
        <authorList>
            <person name="Taylor C.S."/>
            <person name="Kent U.M."/>
            <person name="Fleming P.J."/>
        </authorList>
    </citation>
    <scope>PROTEIN SEQUENCE OF 33-37</scope>
</reference>
<reference key="8">
    <citation type="journal article" date="1990" name="Biochemistry">
        <title>Bovine dopamine beta-hydroxylase, primary structure determined by cDNA cloning and amino acid sequencing.</title>
        <authorList>
            <person name="Wang N."/>
            <person name="Southan C."/>
            <person name="DeWolf W.E. Jr."/>
            <person name="Wells T.N."/>
            <person name="Kruse L.I."/>
            <person name="Leatherbarrow R.J."/>
        </authorList>
    </citation>
    <scope>NUCLEOTIDE SEQUENCE [MRNA] OF 39-566</scope>
    <scope>GLYCOSYLATION AT ASN-177 AND ASN-559</scope>
    <scope>LACK OF PYRROLOQUINOLINE QUINONE BINDING</scope>
</reference>
<reference key="9">
    <citation type="journal article" date="1973" name="Proc. Natl. Acad. Sci. U.S.A.">
        <title>Dopamine-beta-hydroxylase: a tetrameric glycoprotein.</title>
        <authorList>
            <person name="Wallace E.F."/>
            <person name="Krantz M.J."/>
            <person name="Lovenberg W."/>
        </authorList>
    </citation>
    <scope>SUBUNIT</scope>
    <scope>GLYCOSYLATION</scope>
    <scope>TISSUE SPECIFICITY</scope>
    <scope>COFACTOR</scope>
    <scope>CATALYTIC ACTIVITY</scope>
</reference>
<reference key="10">
    <citation type="journal article" date="1989" name="J. Biol. Chem.">
        <title>Spectral studies of bovine dopamine beta-hydroxylase. Absence of covalently bound pyrroloquinoline quinone.</title>
        <authorList>
            <person name="Robertson J.G."/>
            <person name="Kumar A."/>
            <person name="Mancewicz J.A."/>
            <person name="Villafranca J.J."/>
        </authorList>
    </citation>
    <scope>LACK OF PYRROLOQUINOLINE QUINONE BINDING</scope>
</reference>
<reference key="11">
    <citation type="journal article" date="1994" name="Biochemistry">
        <title>Complete assignment of disulfide bonds in bovine dopamine beta-hydroxylase.</title>
        <authorList>
            <person name="Robertson J.G."/>
            <person name="Adams G.W."/>
            <person name="Medzihradszky K.F."/>
            <person name="Burlingame A.L."/>
            <person name="Villafranca J.J."/>
        </authorList>
    </citation>
    <scope>DISULFIDE BONDS</scope>
</reference>
<name>DOPO_BOVIN</name>
<evidence type="ECO:0000250" key="1">
    <source>
        <dbReference type="UniProtKB" id="P09172"/>
    </source>
</evidence>
<evidence type="ECO:0000255" key="2"/>
<evidence type="ECO:0000255" key="3">
    <source>
        <dbReference type="PROSITE-ProRule" id="PRU00246"/>
    </source>
</evidence>
<evidence type="ECO:0000256" key="4">
    <source>
        <dbReference type="SAM" id="MobiDB-lite"/>
    </source>
</evidence>
<evidence type="ECO:0000269" key="5">
    <source>
    </source>
</evidence>
<evidence type="ECO:0000269" key="6">
    <source>
    </source>
</evidence>
<evidence type="ECO:0000269" key="7">
    <source>
    </source>
</evidence>
<evidence type="ECO:0000269" key="8">
    <source>
    </source>
</evidence>
<evidence type="ECO:0000269" key="9">
    <source>
    </source>
</evidence>
<evidence type="ECO:0000269" key="10">
    <source>
    </source>
</evidence>
<evidence type="ECO:0000269" key="11">
    <source>
    </source>
</evidence>
<evidence type="ECO:0000269" key="12">
    <source>
    </source>
</evidence>
<evidence type="ECO:0000305" key="13"/>
<evidence type="ECO:0000305" key="14">
    <source>
    </source>
</evidence>
<organism>
    <name type="scientific">Bos taurus</name>
    <name type="common">Bovine</name>
    <dbReference type="NCBI Taxonomy" id="9913"/>
    <lineage>
        <taxon>Eukaryota</taxon>
        <taxon>Metazoa</taxon>
        <taxon>Chordata</taxon>
        <taxon>Craniata</taxon>
        <taxon>Vertebrata</taxon>
        <taxon>Euteleostomi</taxon>
        <taxon>Mammalia</taxon>
        <taxon>Eutheria</taxon>
        <taxon>Laurasiatheria</taxon>
        <taxon>Artiodactyla</taxon>
        <taxon>Ruminantia</taxon>
        <taxon>Pecora</taxon>
        <taxon>Bovidae</taxon>
        <taxon>Bovinae</taxon>
        <taxon>Bos</taxon>
    </lineage>
</organism>
<proteinExistence type="evidence at protein level"/>
<comment type="function">
    <text evidence="9">Catalyzes the hydroxylation of dopamine to noradrenaline (also known as norepinephrine), and is thus vital for regulation of these neurotransmitters.</text>
</comment>
<comment type="catalytic activity">
    <reaction evidence="9 10">
        <text>dopamine + 2 L-ascorbate + O2 = (R)-noradrenaline + 2 monodehydro-L-ascorbate radical + H2O</text>
        <dbReference type="Rhea" id="RHEA:19117"/>
        <dbReference type="ChEBI" id="CHEBI:15377"/>
        <dbReference type="ChEBI" id="CHEBI:15379"/>
        <dbReference type="ChEBI" id="CHEBI:38290"/>
        <dbReference type="ChEBI" id="CHEBI:59513"/>
        <dbReference type="ChEBI" id="CHEBI:59905"/>
        <dbReference type="ChEBI" id="CHEBI:72587"/>
        <dbReference type="EC" id="1.14.17.1"/>
    </reaction>
    <physiologicalReaction direction="left-to-right" evidence="14">
        <dbReference type="Rhea" id="RHEA:19118"/>
    </physiologicalReaction>
</comment>
<comment type="cofactor">
    <cofactor evidence="9 10">
        <name>Cu(2+)</name>
        <dbReference type="ChEBI" id="CHEBI:29036"/>
    </cofactor>
    <text evidence="10">Binds 2 copper ions per subunit.</text>
</comment>
<comment type="pathway">
    <text evidence="9">Catecholamine biosynthesis; (R)-noradrenaline biosynthesis; (R)-noradrenaline from dopamine: step 1/1.</text>
</comment>
<comment type="subunit">
    <text evidence="10 11">Homotetramer; composed of two disulfide-linked dimers.</text>
</comment>
<comment type="subcellular location">
    <molecule>Soluble dopamine beta-hydroxylase</molecule>
    <subcellularLocation>
        <location>Cytoplasmic vesicle</location>
        <location>Secretory vesicle lumen</location>
    </subcellularLocation>
    <subcellularLocation>
        <location evidence="12 14">Cytoplasmic vesicle</location>
        <location evidence="12 14">Secretory vesicle</location>
        <location evidence="12 14">Chromaffin granule lumen</location>
    </subcellularLocation>
</comment>
<comment type="subcellular location">
    <subcellularLocation>
        <location>Cytoplasmic vesicle</location>
        <location>Secretory vesicle membrane</location>
        <topology>Single-pass type II membrane protein</topology>
    </subcellularLocation>
    <subcellularLocation>
        <location evidence="9">Cytoplasmic vesicle</location>
        <location evidence="9">Secretory vesicle</location>
        <location evidence="9">Chromaffin granule membrane</location>
        <topology evidence="13">Single-pass type II membrane protein</topology>
    </subcellularLocation>
</comment>
<comment type="tissue specificity">
    <text evidence="9 10 12">Detected in chromaffin granules in the adrenal medulla (at protein level) (PubMed:2620060, PubMed:4525162, PubMed:843373). Detected in adrenal medulla (PubMed:2620060).</text>
</comment>
<comment type="PTM">
    <text evidence="9">Proteolytic cleavage after the membrane-anchor leads to the release of the soluble form.</text>
</comment>
<comment type="PTM">
    <text evidence="5 7 10">N-glycosylated.</text>
</comment>
<comment type="similarity">
    <text evidence="13">Belongs to the copper type II ascorbate-dependent monooxygenase family.</text>
</comment>
<comment type="caution">
    <text evidence="6 8">Contrary to earlier results, does not contain a pyrroloquinoline quinone (PQQ) cofactor.</text>
</comment>
<comment type="sequence caution" evidence="13">
    <conflict type="erroneous initiation">
        <sequence resource="EMBL-CDS" id="AAA30490"/>
    </conflict>
</comment>
<sequence>MQVPSPSVREAASMYGTAVAVFLVILVAALQGSAPAESPFPFHIPLDPEGTLELSWNISYAQETIYFQLLVRELKAGVLFGMSDRGELENADLVVLWTDRDGAYFGDAWSDQKGQVHLDSQQDYQLLRAQRTPEGLYLLFKRPFGTCDPNDYLIEDGTVHLVYGFLEEPLRSLESINTSGLHTGLQRVQLLKPSIPKPALPADTRTMEIRAPDVLIPGQQTTYWCYVTELPDGFPRHHIVMYEPIVTEGNEALVHHMEVFQCAAEFETIPHFSGPCDSKMKPQRLNFCRHVLAAWALGAKAFYYPEEAGLAFGGPGSSRFLRLEVHYHNPLVITGRRDSSGIRLYYTAALRRFDAGIMELGLAYTPVMAIPPQETAFVLTGYCTDKCTQLALPASGIHIFASQLHTHLTGRKVVTVLARDGRETEIVNRDNHYSPHFQEIRMLKKVVSVQPGDVLITSCTYNTEDRRLATVGGFGILEEMCVNYVHYYPQTQLELCKSAVDPGFLHKYFRLVNRFNSEEVCTCPQASVPEQFASVPWNSFNREVLKALYGFAPISMHCNRSSAVRFQGEWNRQPLPEIVSRLEEPTPHCPASQAQSPAGPTVLNISGGKG</sequence>
<dbReference type="EC" id="1.14.17.1" evidence="9 10"/>
<dbReference type="EMBL" id="J02890">
    <property type="protein sequence ID" value="AAA30356.1"/>
    <property type="molecule type" value="mRNA"/>
</dbReference>
<dbReference type="EMBL" id="J05160">
    <property type="protein sequence ID" value="AAA30490.1"/>
    <property type="status" value="ALT_INIT"/>
    <property type="molecule type" value="mRNA"/>
</dbReference>
<dbReference type="EMBL" id="BT026311">
    <property type="protein sequence ID" value="ABG81467.1"/>
    <property type="molecule type" value="mRNA"/>
</dbReference>
<dbReference type="EMBL" id="AF118638">
    <property type="protein sequence ID" value="AAD09829.1"/>
    <property type="molecule type" value="mRNA"/>
</dbReference>
<dbReference type="EMBL" id="J02909">
    <property type="protein sequence ID" value="AAA30491.1"/>
    <property type="molecule type" value="mRNA"/>
</dbReference>
<dbReference type="PIR" id="A33650">
    <property type="entry name" value="A33650"/>
</dbReference>
<dbReference type="RefSeq" id="NP_851338.2">
    <property type="nucleotide sequence ID" value="NM_180995.3"/>
</dbReference>
<dbReference type="SMR" id="P15101"/>
<dbReference type="BioGRID" id="158157">
    <property type="interactions" value="1"/>
</dbReference>
<dbReference type="FunCoup" id="P15101">
    <property type="interactions" value="68"/>
</dbReference>
<dbReference type="STRING" id="9913.ENSBTAP00000047899"/>
<dbReference type="BindingDB" id="P15101"/>
<dbReference type="ChEMBL" id="CHEMBL4702"/>
<dbReference type="DrugCentral" id="P15101"/>
<dbReference type="GlyCosmos" id="P15101">
    <property type="glycosylation" value="2 sites, No reported glycans"/>
</dbReference>
<dbReference type="GlyGen" id="P15101">
    <property type="glycosylation" value="2 sites"/>
</dbReference>
<dbReference type="iPTMnet" id="P15101"/>
<dbReference type="PaxDb" id="9913-ENSBTAP00000005924"/>
<dbReference type="Ensembl" id="ENSBTAT00000055221.3">
    <property type="protein sequence ID" value="ENSBTAP00000047899.3"/>
    <property type="gene ID" value="ENSBTAG00000004508.7"/>
</dbReference>
<dbReference type="GeneID" id="280758"/>
<dbReference type="KEGG" id="bta:280758"/>
<dbReference type="CTD" id="1621"/>
<dbReference type="VGNC" id="VGNC:27888">
    <property type="gene designation" value="DBH"/>
</dbReference>
<dbReference type="eggNOG" id="KOG3568">
    <property type="taxonomic scope" value="Eukaryota"/>
</dbReference>
<dbReference type="GeneTree" id="ENSGT00530000063085"/>
<dbReference type="InParanoid" id="P15101"/>
<dbReference type="OrthoDB" id="129121at2759"/>
<dbReference type="TreeFam" id="TF320698"/>
<dbReference type="SABIO-RK" id="P15101"/>
<dbReference type="UniPathway" id="UPA00748">
    <property type="reaction ID" value="UER00735"/>
</dbReference>
<dbReference type="PRO" id="PR:P15101"/>
<dbReference type="Proteomes" id="UP000009136">
    <property type="component" value="Chromosome 11"/>
</dbReference>
<dbReference type="GO" id="GO:0034451">
    <property type="term" value="C:centriolar satellite"/>
    <property type="evidence" value="ECO:0007669"/>
    <property type="project" value="Ensembl"/>
</dbReference>
<dbReference type="GO" id="GO:0034466">
    <property type="term" value="C:chromaffin granule lumen"/>
    <property type="evidence" value="ECO:0007669"/>
    <property type="project" value="UniProtKB-SubCell"/>
</dbReference>
<dbReference type="GO" id="GO:0042584">
    <property type="term" value="C:chromaffin granule membrane"/>
    <property type="evidence" value="ECO:0000314"/>
    <property type="project" value="UniProtKB"/>
</dbReference>
<dbReference type="GO" id="GO:0005783">
    <property type="term" value="C:endoplasmic reticulum"/>
    <property type="evidence" value="ECO:0007669"/>
    <property type="project" value="Ensembl"/>
</dbReference>
<dbReference type="GO" id="GO:0005615">
    <property type="term" value="C:extracellular space"/>
    <property type="evidence" value="ECO:0000314"/>
    <property type="project" value="UniProtKB"/>
</dbReference>
<dbReference type="GO" id="GO:0034774">
    <property type="term" value="C:secretory granule lumen"/>
    <property type="evidence" value="ECO:0000250"/>
    <property type="project" value="UniProtKB"/>
</dbReference>
<dbReference type="GO" id="GO:0030667">
    <property type="term" value="C:secretory granule membrane"/>
    <property type="evidence" value="ECO:0000318"/>
    <property type="project" value="GO_Central"/>
</dbReference>
<dbReference type="GO" id="GO:0030658">
    <property type="term" value="C:transport vesicle membrane"/>
    <property type="evidence" value="ECO:0007669"/>
    <property type="project" value="UniProtKB-SubCell"/>
</dbReference>
<dbReference type="GO" id="GO:0005507">
    <property type="term" value="F:copper ion binding"/>
    <property type="evidence" value="ECO:0000314"/>
    <property type="project" value="UniProtKB"/>
</dbReference>
<dbReference type="GO" id="GO:0004500">
    <property type="term" value="F:dopamine beta-monooxygenase activity"/>
    <property type="evidence" value="ECO:0000314"/>
    <property type="project" value="UniProtKB"/>
</dbReference>
<dbReference type="GO" id="GO:0031418">
    <property type="term" value="F:L-ascorbic acid binding"/>
    <property type="evidence" value="ECO:0007669"/>
    <property type="project" value="UniProtKB-KW"/>
</dbReference>
<dbReference type="GO" id="GO:0048149">
    <property type="term" value="P:behavioral response to ethanol"/>
    <property type="evidence" value="ECO:0007669"/>
    <property type="project" value="Ensembl"/>
</dbReference>
<dbReference type="GO" id="GO:0001974">
    <property type="term" value="P:blood vessel remodeling"/>
    <property type="evidence" value="ECO:0007669"/>
    <property type="project" value="Ensembl"/>
</dbReference>
<dbReference type="GO" id="GO:0042420">
    <property type="term" value="P:dopamine catabolic process"/>
    <property type="evidence" value="ECO:0000314"/>
    <property type="project" value="UniProtKB"/>
</dbReference>
<dbReference type="GO" id="GO:0042596">
    <property type="term" value="P:fear response"/>
    <property type="evidence" value="ECO:0007669"/>
    <property type="project" value="Ensembl"/>
</dbReference>
<dbReference type="GO" id="GO:0042593">
    <property type="term" value="P:glucose homeostasis"/>
    <property type="evidence" value="ECO:0007669"/>
    <property type="project" value="Ensembl"/>
</dbReference>
<dbReference type="GO" id="GO:0042309">
    <property type="term" value="P:homoiothermy"/>
    <property type="evidence" value="ECO:0007669"/>
    <property type="project" value="Ensembl"/>
</dbReference>
<dbReference type="GO" id="GO:0002443">
    <property type="term" value="P:leukocyte mediated immunity"/>
    <property type="evidence" value="ECO:0007669"/>
    <property type="project" value="Ensembl"/>
</dbReference>
<dbReference type="GO" id="GO:0050900">
    <property type="term" value="P:leukocyte migration"/>
    <property type="evidence" value="ECO:0007669"/>
    <property type="project" value="Ensembl"/>
</dbReference>
<dbReference type="GO" id="GO:0007626">
    <property type="term" value="P:locomotory behavior"/>
    <property type="evidence" value="ECO:0007669"/>
    <property type="project" value="Ensembl"/>
</dbReference>
<dbReference type="GO" id="GO:0042711">
    <property type="term" value="P:maternal behavior"/>
    <property type="evidence" value="ECO:0007669"/>
    <property type="project" value="Ensembl"/>
</dbReference>
<dbReference type="GO" id="GO:0007613">
    <property type="term" value="P:memory"/>
    <property type="evidence" value="ECO:0007669"/>
    <property type="project" value="Ensembl"/>
</dbReference>
<dbReference type="GO" id="GO:0042421">
    <property type="term" value="P:norepinephrine biosynthetic process"/>
    <property type="evidence" value="ECO:0000250"/>
    <property type="project" value="UniProtKB"/>
</dbReference>
<dbReference type="GO" id="GO:0006589">
    <property type="term" value="P:octopamine biosynthetic process"/>
    <property type="evidence" value="ECO:0000318"/>
    <property type="project" value="GO_Central"/>
</dbReference>
<dbReference type="GO" id="GO:0120162">
    <property type="term" value="P:positive regulation of cold-induced thermogenesis"/>
    <property type="evidence" value="ECO:0007669"/>
    <property type="project" value="Ensembl"/>
</dbReference>
<dbReference type="GO" id="GO:0045907">
    <property type="term" value="P:positive regulation of vasoconstriction"/>
    <property type="evidence" value="ECO:0007669"/>
    <property type="project" value="Ensembl"/>
</dbReference>
<dbReference type="GO" id="GO:2001236">
    <property type="term" value="P:regulation of extrinsic apoptotic signaling pathway"/>
    <property type="evidence" value="ECO:0007669"/>
    <property type="project" value="Ensembl"/>
</dbReference>
<dbReference type="GO" id="GO:1904705">
    <property type="term" value="P:regulation of vascular associated smooth muscle cell proliferation"/>
    <property type="evidence" value="ECO:0007669"/>
    <property type="project" value="Ensembl"/>
</dbReference>
<dbReference type="GO" id="GO:1905562">
    <property type="term" value="P:regulation of vascular endothelial cell proliferation"/>
    <property type="evidence" value="ECO:0007669"/>
    <property type="project" value="Ensembl"/>
</dbReference>
<dbReference type="GO" id="GO:0001975">
    <property type="term" value="P:response to amphetamine"/>
    <property type="evidence" value="ECO:0007669"/>
    <property type="project" value="Ensembl"/>
</dbReference>
<dbReference type="GO" id="GO:0048265">
    <property type="term" value="P:response to pain"/>
    <property type="evidence" value="ECO:0007669"/>
    <property type="project" value="Ensembl"/>
</dbReference>
<dbReference type="GO" id="GO:0042310">
    <property type="term" value="P:vasoconstriction"/>
    <property type="evidence" value="ECO:0007669"/>
    <property type="project" value="Ensembl"/>
</dbReference>
<dbReference type="GO" id="GO:0008542">
    <property type="term" value="P:visual learning"/>
    <property type="evidence" value="ECO:0007669"/>
    <property type="project" value="Ensembl"/>
</dbReference>
<dbReference type="CDD" id="cd09631">
    <property type="entry name" value="DOMON_DOH"/>
    <property type="match status" value="1"/>
</dbReference>
<dbReference type="FunFam" id="2.60.120.310:FF:000003">
    <property type="entry name" value="Dopamine beta-hydroxylase"/>
    <property type="match status" value="1"/>
</dbReference>
<dbReference type="FunFam" id="2.60.120.230:FF:000001">
    <property type="entry name" value="Monooxygenase, DBH-like 1"/>
    <property type="match status" value="1"/>
</dbReference>
<dbReference type="Gene3D" id="2.60.120.230">
    <property type="match status" value="1"/>
</dbReference>
<dbReference type="Gene3D" id="2.60.120.310">
    <property type="entry name" value="Copper type II, ascorbate-dependent monooxygenase, N-terminal domain"/>
    <property type="match status" value="1"/>
</dbReference>
<dbReference type="InterPro" id="IPR014784">
    <property type="entry name" value="Cu2_ascorb_mOase-like_C"/>
</dbReference>
<dbReference type="InterPro" id="IPR020611">
    <property type="entry name" value="Cu2_ascorb_mOase_CS-1"/>
</dbReference>
<dbReference type="InterPro" id="IPR014783">
    <property type="entry name" value="Cu2_ascorb_mOase_CS-2"/>
</dbReference>
<dbReference type="InterPro" id="IPR000323">
    <property type="entry name" value="Cu2_ascorb_mOase_N"/>
</dbReference>
<dbReference type="InterPro" id="IPR036939">
    <property type="entry name" value="Cu2_ascorb_mOase_N_sf"/>
</dbReference>
<dbReference type="InterPro" id="IPR024548">
    <property type="entry name" value="Cu2_monoox_C"/>
</dbReference>
<dbReference type="InterPro" id="IPR000945">
    <property type="entry name" value="DBH-like"/>
</dbReference>
<dbReference type="InterPro" id="IPR045266">
    <property type="entry name" value="DOH_DOMON"/>
</dbReference>
<dbReference type="InterPro" id="IPR005018">
    <property type="entry name" value="DOMON_domain"/>
</dbReference>
<dbReference type="InterPro" id="IPR008977">
    <property type="entry name" value="PHM/PNGase_F_dom_sf"/>
</dbReference>
<dbReference type="InterPro" id="IPR028460">
    <property type="entry name" value="Tbh/DBH"/>
</dbReference>
<dbReference type="PANTHER" id="PTHR10157">
    <property type="entry name" value="DOPAMINE BETA HYDROXYLASE RELATED"/>
    <property type="match status" value="1"/>
</dbReference>
<dbReference type="PANTHER" id="PTHR10157:SF29">
    <property type="entry name" value="DOPAMINE BETA-HYDROXYLASE"/>
    <property type="match status" value="1"/>
</dbReference>
<dbReference type="Pfam" id="PF03712">
    <property type="entry name" value="Cu2_monoox_C"/>
    <property type="match status" value="1"/>
</dbReference>
<dbReference type="Pfam" id="PF01082">
    <property type="entry name" value="Cu2_monooxygen"/>
    <property type="match status" value="1"/>
</dbReference>
<dbReference type="Pfam" id="PF03351">
    <property type="entry name" value="DOMON"/>
    <property type="match status" value="1"/>
</dbReference>
<dbReference type="PRINTS" id="PR00767">
    <property type="entry name" value="DBMONOXGNASE"/>
</dbReference>
<dbReference type="SMART" id="SM00664">
    <property type="entry name" value="DoH"/>
    <property type="match status" value="1"/>
</dbReference>
<dbReference type="SUPFAM" id="SSF49742">
    <property type="entry name" value="PHM/PNGase F"/>
    <property type="match status" value="2"/>
</dbReference>
<dbReference type="PROSITE" id="PS00084">
    <property type="entry name" value="CU2_MONOOXYGENASE_1"/>
    <property type="match status" value="1"/>
</dbReference>
<dbReference type="PROSITE" id="PS00085">
    <property type="entry name" value="CU2_MONOOXYGENASE_2"/>
    <property type="match status" value="1"/>
</dbReference>
<dbReference type="PROSITE" id="PS50836">
    <property type="entry name" value="DOMON"/>
    <property type="match status" value="1"/>
</dbReference>
<accession>P15101</accession>
<accession>Q0V8A8</accession>
<accession>Q28094</accession>
<accession>Q9TVD1</accession>
<feature type="chain" id="PRO_0000006355" description="Dopamine beta-hydroxylase">
    <location>
        <begin position="1"/>
        <end position="610"/>
    </location>
</feature>
<feature type="chain" id="PRO_0000308206" description="Soluble dopamine beta-hydroxylase" evidence="7">
    <location>
        <begin position="33"/>
        <end position="610"/>
    </location>
</feature>
<feature type="topological domain" description="Cytoplasmic" evidence="2">
    <location>
        <begin position="1"/>
        <end position="9"/>
    </location>
</feature>
<feature type="transmembrane region" description="Helical; Signal-anchor for type II membrane protein" evidence="2">
    <location>
        <begin position="10"/>
        <end position="30"/>
    </location>
</feature>
<feature type="topological domain" description="Intragranular" evidence="2">
    <location>
        <begin position="31"/>
        <end position="610"/>
    </location>
</feature>
<feature type="domain" description="DOMON" evidence="3">
    <location>
        <begin position="50"/>
        <end position="166"/>
    </location>
</feature>
<feature type="region of interest" description="Disordered" evidence="4">
    <location>
        <begin position="585"/>
        <end position="610"/>
    </location>
</feature>
<feature type="active site" evidence="2">
    <location>
        <position position="223"/>
    </location>
</feature>
<feature type="active site" evidence="2">
    <location>
        <position position="405"/>
    </location>
</feature>
<feature type="binding site" evidence="1">
    <location>
        <position position="255"/>
    </location>
    <ligand>
        <name>Cu(2+)</name>
        <dbReference type="ChEBI" id="CHEBI:29036"/>
        <label>A</label>
    </ligand>
</feature>
<feature type="binding site" evidence="1">
    <location>
        <position position="256"/>
    </location>
    <ligand>
        <name>Cu(2+)</name>
        <dbReference type="ChEBI" id="CHEBI:29036"/>
        <label>A</label>
    </ligand>
</feature>
<feature type="binding site" evidence="1">
    <location>
        <position position="326"/>
    </location>
    <ligand>
        <name>Cu(2+)</name>
        <dbReference type="ChEBI" id="CHEBI:29036"/>
        <label>A</label>
    </ligand>
</feature>
<feature type="binding site" evidence="1">
    <location>
        <position position="405"/>
    </location>
    <ligand>
        <name>Cu(2+)</name>
        <dbReference type="ChEBI" id="CHEBI:29036"/>
        <label>B</label>
    </ligand>
</feature>
<feature type="binding site" evidence="1">
    <location>
        <position position="407"/>
    </location>
    <ligand>
        <name>Cu(2+)</name>
        <dbReference type="ChEBI" id="CHEBI:29036"/>
        <label>B</label>
    </ligand>
</feature>
<feature type="binding site" evidence="1">
    <location>
        <position position="480"/>
    </location>
    <ligand>
        <name>Cu(2+)</name>
        <dbReference type="ChEBI" id="CHEBI:29036"/>
        <label>B</label>
    </ligand>
</feature>
<feature type="site" description="Cleavage" evidence="7 9 12">
    <location>
        <begin position="32"/>
        <end position="33"/>
    </location>
</feature>
<feature type="glycosylation site" description="N-linked (GlcNAc...) asparagine" evidence="6">
    <location>
        <position position="177"/>
    </location>
</feature>
<feature type="glycosylation site" description="N-linked (GlcNAc...) asparagine" evidence="6">
    <location>
        <position position="559"/>
    </location>
</feature>
<feature type="disulfide bond" evidence="11">
    <location>
        <begin position="147"/>
        <end position="589"/>
    </location>
</feature>
<feature type="disulfide bond" evidence="11">
    <location>
        <begin position="225"/>
        <end position="276"/>
    </location>
</feature>
<feature type="disulfide bond" evidence="11">
    <location>
        <begin position="262"/>
        <end position="288"/>
    </location>
</feature>
<feature type="disulfide bond" evidence="11">
    <location>
        <begin position="383"/>
        <end position="496"/>
    </location>
</feature>
<feature type="disulfide bond" evidence="11">
    <location>
        <begin position="387"/>
        <end position="558"/>
    </location>
</feature>
<feature type="disulfide bond" evidence="11">
    <location>
        <begin position="459"/>
        <end position="481"/>
    </location>
</feature>
<feature type="disulfide bond" description="Interchain" evidence="11">
    <location>
        <position position="521"/>
    </location>
</feature>
<feature type="disulfide bond" description="Interchain" evidence="11">
    <location>
        <position position="523"/>
    </location>
</feature>
<feature type="sequence conflict" description="In Ref. 6; AA sequence." evidence="13" ref="6">
    <original>P</original>
    <variation>T</variation>
    <location>
        <position position="35"/>
    </location>
</feature>
<feature type="sequence conflict" description="In Ref. 4; AAD09829." evidence="13" ref="4">
    <original>F</original>
    <variation>S</variation>
    <location>
        <position position="40"/>
    </location>
</feature>
<feature type="sequence conflict" description="In Ref. 6; AA sequence." evidence="13" ref="6">
    <original>P</original>
    <variation>T</variation>
    <location>
        <position position="48"/>
    </location>
</feature>
<feature type="sequence conflict" description="In Ref. 5; AA sequence." evidence="13" ref="5">
    <original>SWN</original>
    <variation>RYV</variation>
    <location>
        <begin position="55"/>
        <end position="57"/>
    </location>
</feature>
<feature type="sequence conflict" description="In Ref. 5; AA sequence." evidence="13" ref="5">
    <original>L</original>
    <variation>F</variation>
    <location>
        <position position="74"/>
    </location>
</feature>
<feature type="sequence conflict" description="In Ref. 4; AAD09829." evidence="13" ref="4">
    <original>Y</original>
    <variation>D</variation>
    <location>
        <position position="104"/>
    </location>
</feature>
<feature type="sequence conflict" description="In Ref. 1; AAA30356." evidence="13" ref="1">
    <original>R</original>
    <variation>C</variation>
    <location>
        <position position="205"/>
    </location>
</feature>
<feature type="sequence conflict" description="In Ref. 3; ABG81467." evidence="13" ref="3">
    <original>L</original>
    <variation>F</variation>
    <location>
        <position position="215"/>
    </location>
</feature>
<feature type="sequence conflict" description="In Ref. 1; AAA30356." evidence="13" ref="1">
    <original>ETI</original>
    <variation>RDH</variation>
    <location>
        <begin position="267"/>
        <end position="269"/>
    </location>
</feature>
<feature type="sequence conflict" description="In Ref. 8; AAA30491." evidence="13" ref="8">
    <original>A</original>
    <variation>R</variation>
    <location>
        <position position="349"/>
    </location>
</feature>
<feature type="sequence conflict" description="In Ref. 4; AAD09829." evidence="13" ref="4">
    <original>A</original>
    <variation>P</variation>
    <location>
        <position position="376"/>
    </location>
</feature>
<feature type="sequence conflict" description="In Ref. 5; AA sequence." evidence="13" ref="5">
    <original>R</original>
    <variation>C</variation>
    <location>
        <position position="560"/>
    </location>
</feature>
<feature type="sequence conflict" description="In Ref. 4; AAD09829." evidence="13" ref="4">
    <original>FQ</original>
    <variation>LE</variation>
    <location>
        <begin position="566"/>
        <end position="567"/>
    </location>
</feature>
<feature type="sequence conflict" description="In Ref. 1; AAA30356." evidence="13" ref="1">
    <original>H</original>
    <variation>Q</variation>
    <location>
        <position position="588"/>
    </location>
</feature>
<gene>
    <name type="primary">DBH</name>
</gene>